<dbReference type="EC" id="7.1.2.2" evidence="1"/>
<dbReference type="EMBL" id="AE009949">
    <property type="protein sequence ID" value="AAL96958.1"/>
    <property type="molecule type" value="Genomic_DNA"/>
</dbReference>
<dbReference type="RefSeq" id="WP_011017275.1">
    <property type="nucleotide sequence ID" value="NC_003485.1"/>
</dbReference>
<dbReference type="SMR" id="Q8P2U6"/>
<dbReference type="KEGG" id="spm:spyM18_0150"/>
<dbReference type="HOGENOM" id="CLU_008162_3_1_9"/>
<dbReference type="GO" id="GO:0045259">
    <property type="term" value="C:proton-transporting ATP synthase complex"/>
    <property type="evidence" value="ECO:0007669"/>
    <property type="project" value="UniProtKB-ARBA"/>
</dbReference>
<dbReference type="GO" id="GO:0005524">
    <property type="term" value="F:ATP binding"/>
    <property type="evidence" value="ECO:0007669"/>
    <property type="project" value="UniProtKB-UniRule"/>
</dbReference>
<dbReference type="GO" id="GO:0046933">
    <property type="term" value="F:proton-transporting ATP synthase activity, rotational mechanism"/>
    <property type="evidence" value="ECO:0007669"/>
    <property type="project" value="UniProtKB-UniRule"/>
</dbReference>
<dbReference type="GO" id="GO:0046961">
    <property type="term" value="F:proton-transporting ATPase activity, rotational mechanism"/>
    <property type="evidence" value="ECO:0007669"/>
    <property type="project" value="InterPro"/>
</dbReference>
<dbReference type="GO" id="GO:0042777">
    <property type="term" value="P:proton motive force-driven plasma membrane ATP synthesis"/>
    <property type="evidence" value="ECO:0007669"/>
    <property type="project" value="UniProtKB-UniRule"/>
</dbReference>
<dbReference type="CDD" id="cd18111">
    <property type="entry name" value="ATP-synt_V_A-type_alpha_C"/>
    <property type="match status" value="1"/>
</dbReference>
<dbReference type="CDD" id="cd18119">
    <property type="entry name" value="ATP-synt_V_A-type_alpha_N"/>
    <property type="match status" value="1"/>
</dbReference>
<dbReference type="CDD" id="cd01134">
    <property type="entry name" value="V_A-ATPase_A"/>
    <property type="match status" value="1"/>
</dbReference>
<dbReference type="FunFam" id="3.40.50.300:FF:000675">
    <property type="entry name" value="V-type ATP synthase alpha chain"/>
    <property type="match status" value="1"/>
</dbReference>
<dbReference type="FunFam" id="2.40.30.20:FF:000002">
    <property type="entry name" value="V-type proton ATPase catalytic subunit A"/>
    <property type="match status" value="1"/>
</dbReference>
<dbReference type="FunFam" id="2.40.50.100:FF:000008">
    <property type="entry name" value="V-type proton ATPase catalytic subunit A"/>
    <property type="match status" value="1"/>
</dbReference>
<dbReference type="Gene3D" id="2.40.30.20">
    <property type="match status" value="1"/>
</dbReference>
<dbReference type="Gene3D" id="2.40.50.100">
    <property type="match status" value="1"/>
</dbReference>
<dbReference type="Gene3D" id="1.10.1140.10">
    <property type="entry name" value="Bovine Mitochondrial F1-atpase, Atp Synthase Beta Chain, Chain D, domain 3"/>
    <property type="match status" value="1"/>
</dbReference>
<dbReference type="Gene3D" id="3.40.50.300">
    <property type="entry name" value="P-loop containing nucleotide triphosphate hydrolases"/>
    <property type="match status" value="1"/>
</dbReference>
<dbReference type="HAMAP" id="MF_00309">
    <property type="entry name" value="ATP_synth_A_arch"/>
    <property type="match status" value="1"/>
</dbReference>
<dbReference type="InterPro" id="IPR055190">
    <property type="entry name" value="ATP-synt_VA_C"/>
</dbReference>
<dbReference type="InterPro" id="IPR031686">
    <property type="entry name" value="ATP-synth_a_Xtn"/>
</dbReference>
<dbReference type="InterPro" id="IPR023366">
    <property type="entry name" value="ATP_synth_asu-like_sf"/>
</dbReference>
<dbReference type="InterPro" id="IPR020003">
    <property type="entry name" value="ATPase_a/bsu_AS"/>
</dbReference>
<dbReference type="InterPro" id="IPR004100">
    <property type="entry name" value="ATPase_F1/V1/A1_a/bsu_N"/>
</dbReference>
<dbReference type="InterPro" id="IPR036121">
    <property type="entry name" value="ATPase_F1/V1/A1_a/bsu_N_sf"/>
</dbReference>
<dbReference type="InterPro" id="IPR000194">
    <property type="entry name" value="ATPase_F1/V1/A1_a/bsu_nucl-bd"/>
</dbReference>
<dbReference type="InterPro" id="IPR024034">
    <property type="entry name" value="ATPase_F1/V1_b/a_C"/>
</dbReference>
<dbReference type="InterPro" id="IPR027417">
    <property type="entry name" value="P-loop_NTPase"/>
</dbReference>
<dbReference type="InterPro" id="IPR022878">
    <property type="entry name" value="V-ATPase_asu"/>
</dbReference>
<dbReference type="NCBIfam" id="NF003220">
    <property type="entry name" value="PRK04192.1"/>
    <property type="match status" value="1"/>
</dbReference>
<dbReference type="PANTHER" id="PTHR43607:SF1">
    <property type="entry name" value="H(+)-TRANSPORTING TWO-SECTOR ATPASE"/>
    <property type="match status" value="1"/>
</dbReference>
<dbReference type="PANTHER" id="PTHR43607">
    <property type="entry name" value="V-TYPE PROTON ATPASE CATALYTIC SUBUNIT A"/>
    <property type="match status" value="1"/>
</dbReference>
<dbReference type="Pfam" id="PF00006">
    <property type="entry name" value="ATP-synt_ab"/>
    <property type="match status" value="1"/>
</dbReference>
<dbReference type="Pfam" id="PF02874">
    <property type="entry name" value="ATP-synt_ab_N"/>
    <property type="match status" value="1"/>
</dbReference>
<dbReference type="Pfam" id="PF16886">
    <property type="entry name" value="ATP-synt_ab_Xtn"/>
    <property type="match status" value="1"/>
</dbReference>
<dbReference type="Pfam" id="PF22919">
    <property type="entry name" value="ATP-synt_VA_C"/>
    <property type="match status" value="1"/>
</dbReference>
<dbReference type="SUPFAM" id="SSF47917">
    <property type="entry name" value="C-terminal domain of alpha and beta subunits of F1 ATP synthase"/>
    <property type="match status" value="1"/>
</dbReference>
<dbReference type="SUPFAM" id="SSF50615">
    <property type="entry name" value="N-terminal domain of alpha and beta subunits of F1 ATP synthase"/>
    <property type="match status" value="1"/>
</dbReference>
<dbReference type="SUPFAM" id="SSF52540">
    <property type="entry name" value="P-loop containing nucleoside triphosphate hydrolases"/>
    <property type="match status" value="1"/>
</dbReference>
<dbReference type="PROSITE" id="PS00152">
    <property type="entry name" value="ATPASE_ALPHA_BETA"/>
    <property type="match status" value="1"/>
</dbReference>
<name>VATA_STRP8</name>
<accession>Q8P2U6</accession>
<evidence type="ECO:0000255" key="1">
    <source>
        <dbReference type="HAMAP-Rule" id="MF_00309"/>
    </source>
</evidence>
<comment type="function">
    <text evidence="1">Produces ATP from ADP in the presence of a proton gradient across the membrane. The V-type alpha chain is a catalytic subunit.</text>
</comment>
<comment type="catalytic activity">
    <reaction evidence="1">
        <text>ATP + H2O + 4 H(+)(in) = ADP + phosphate + 5 H(+)(out)</text>
        <dbReference type="Rhea" id="RHEA:57720"/>
        <dbReference type="ChEBI" id="CHEBI:15377"/>
        <dbReference type="ChEBI" id="CHEBI:15378"/>
        <dbReference type="ChEBI" id="CHEBI:30616"/>
        <dbReference type="ChEBI" id="CHEBI:43474"/>
        <dbReference type="ChEBI" id="CHEBI:456216"/>
        <dbReference type="EC" id="7.1.2.2"/>
    </reaction>
</comment>
<comment type="similarity">
    <text evidence="1">Belongs to the ATPase alpha/beta chains family.</text>
</comment>
<gene>
    <name evidence="1" type="primary">atpA</name>
    <name type="ordered locus">spyM18_0150</name>
</gene>
<sequence length="591" mass="64983">MNQGKIITVSGPLVVASGMQEANIQDICRVGHLGLVGEIIEMRRDQASIQVYEETSGIGPGEPVVTTGCPLSVELGPGLISEMFDGIQRPLDRFQKATDSDFLIRGVAIPSLDRKAKWAFIPKLSVGQEVVAGDILGTVQETAVIEHRIMVPYKVSGTLVAIHAGDFTVTDTVYEIKQEDGSIYQGSLMQTWPVRQSRPVAQKLIPVEPLVTGQRVIDTFFPVTKGGAAAVPGPFGAGKTVVQHQIAKFANVDIVIYVGCGERGNEMTDVLNEFPELIDPNTGQSIMERTVLIANTSNMPVAAREASIYTGITIAEYFRDMGYSVAIMADSTSRWAEALREMSGRLQEMPGDEGYPAYLGSRIAEYYERSGRVRTLGSQEREGTITAIGAVSPPGGDISEPVTQNTLRIVKVFWGLDAPLAQRRHFPAINWLTSYSLYQDDVGSYIDRKQQSNWSNKVTRAMAILQREASLEEIVRLVGLDSLSEQDRLTMAVARQIREDYLQQNAFDSVDTFTSFPKQEAMLTNILTFNEEASKALSLGAYFNEIMEGTAQVRDRIARSKFIPEENLEQIKGLTQKVTKEIHHVLAKGGI</sequence>
<reference key="1">
    <citation type="journal article" date="2002" name="Proc. Natl. Acad. Sci. U.S.A.">
        <title>Genome sequence and comparative microarray analysis of serotype M18 group A Streptococcus strains associated with acute rheumatic fever outbreaks.</title>
        <authorList>
            <person name="Smoot J.C."/>
            <person name="Barbian K.D."/>
            <person name="Van Gompel J.J."/>
            <person name="Smoot L.M."/>
            <person name="Chaussee M.S."/>
            <person name="Sylva G.L."/>
            <person name="Sturdevant D.E."/>
            <person name="Ricklefs S.M."/>
            <person name="Porcella S.F."/>
            <person name="Parkins L.D."/>
            <person name="Beres S.B."/>
            <person name="Campbell D.S."/>
            <person name="Smith T.M."/>
            <person name="Zhang Q."/>
            <person name="Kapur V."/>
            <person name="Daly J.A."/>
            <person name="Veasy L.G."/>
            <person name="Musser J.M."/>
        </authorList>
    </citation>
    <scope>NUCLEOTIDE SEQUENCE [LARGE SCALE GENOMIC DNA]</scope>
    <source>
        <strain>MGAS8232</strain>
    </source>
</reference>
<organism>
    <name type="scientific">Streptococcus pyogenes serotype M18 (strain MGAS8232)</name>
    <dbReference type="NCBI Taxonomy" id="186103"/>
    <lineage>
        <taxon>Bacteria</taxon>
        <taxon>Bacillati</taxon>
        <taxon>Bacillota</taxon>
        <taxon>Bacilli</taxon>
        <taxon>Lactobacillales</taxon>
        <taxon>Streptococcaceae</taxon>
        <taxon>Streptococcus</taxon>
    </lineage>
</organism>
<protein>
    <recommendedName>
        <fullName evidence="1">V-type ATP synthase alpha chain</fullName>
        <ecNumber evidence="1">7.1.2.2</ecNumber>
    </recommendedName>
    <alternativeName>
        <fullName evidence="1">V-ATPase subunit A</fullName>
    </alternativeName>
</protein>
<feature type="chain" id="PRO_0000144618" description="V-type ATP synthase alpha chain">
    <location>
        <begin position="1"/>
        <end position="591"/>
    </location>
</feature>
<feature type="binding site" evidence="1">
    <location>
        <begin position="233"/>
        <end position="240"/>
    </location>
    <ligand>
        <name>ATP</name>
        <dbReference type="ChEBI" id="CHEBI:30616"/>
    </ligand>
</feature>
<proteinExistence type="inferred from homology"/>
<keyword id="KW-0066">ATP synthesis</keyword>
<keyword id="KW-0067">ATP-binding</keyword>
<keyword id="KW-0375">Hydrogen ion transport</keyword>
<keyword id="KW-0406">Ion transport</keyword>
<keyword id="KW-0547">Nucleotide-binding</keyword>
<keyword id="KW-1278">Translocase</keyword>
<keyword id="KW-0813">Transport</keyword>